<name>DTD_SHESR</name>
<evidence type="ECO:0000255" key="1">
    <source>
        <dbReference type="HAMAP-Rule" id="MF_00518"/>
    </source>
</evidence>
<comment type="function">
    <text evidence="1">An aminoacyl-tRNA editing enzyme that deacylates mischarged D-aminoacyl-tRNAs. Also deacylates mischarged glycyl-tRNA(Ala), protecting cells against glycine mischarging by AlaRS. Acts via tRNA-based rather than protein-based catalysis; rejects L-amino acids rather than detecting D-amino acids in the active site. By recycling D-aminoacyl-tRNA to D-amino acids and free tRNA molecules, this enzyme counteracts the toxicity associated with the formation of D-aminoacyl-tRNA entities in vivo and helps enforce protein L-homochirality.</text>
</comment>
<comment type="catalytic activity">
    <reaction evidence="1">
        <text>glycyl-tRNA(Ala) + H2O = tRNA(Ala) + glycine + H(+)</text>
        <dbReference type="Rhea" id="RHEA:53744"/>
        <dbReference type="Rhea" id="RHEA-COMP:9657"/>
        <dbReference type="Rhea" id="RHEA-COMP:13640"/>
        <dbReference type="ChEBI" id="CHEBI:15377"/>
        <dbReference type="ChEBI" id="CHEBI:15378"/>
        <dbReference type="ChEBI" id="CHEBI:57305"/>
        <dbReference type="ChEBI" id="CHEBI:78442"/>
        <dbReference type="ChEBI" id="CHEBI:78522"/>
        <dbReference type="EC" id="3.1.1.96"/>
    </reaction>
</comment>
<comment type="catalytic activity">
    <reaction evidence="1">
        <text>a D-aminoacyl-tRNA + H2O = a tRNA + a D-alpha-amino acid + H(+)</text>
        <dbReference type="Rhea" id="RHEA:13953"/>
        <dbReference type="Rhea" id="RHEA-COMP:10123"/>
        <dbReference type="Rhea" id="RHEA-COMP:10124"/>
        <dbReference type="ChEBI" id="CHEBI:15377"/>
        <dbReference type="ChEBI" id="CHEBI:15378"/>
        <dbReference type="ChEBI" id="CHEBI:59871"/>
        <dbReference type="ChEBI" id="CHEBI:78442"/>
        <dbReference type="ChEBI" id="CHEBI:79333"/>
        <dbReference type="EC" id="3.1.1.96"/>
    </reaction>
</comment>
<comment type="subunit">
    <text evidence="1">Homodimer.</text>
</comment>
<comment type="subcellular location">
    <subcellularLocation>
        <location evidence="1">Cytoplasm</location>
    </subcellularLocation>
</comment>
<comment type="domain">
    <text evidence="1">A Gly-cisPro motif from one monomer fits into the active site of the other monomer to allow specific chiral rejection of L-amino acids.</text>
</comment>
<comment type="similarity">
    <text evidence="1">Belongs to the DTD family.</text>
</comment>
<gene>
    <name evidence="1" type="primary">dtd</name>
    <name type="ordered locus">Shewmr7_3705</name>
</gene>
<keyword id="KW-0963">Cytoplasm</keyword>
<keyword id="KW-0378">Hydrolase</keyword>
<keyword id="KW-0694">RNA-binding</keyword>
<keyword id="KW-0820">tRNA-binding</keyword>
<accession>Q0HQC0</accession>
<proteinExistence type="inferred from homology"/>
<organism>
    <name type="scientific">Shewanella sp. (strain MR-7)</name>
    <dbReference type="NCBI Taxonomy" id="60481"/>
    <lineage>
        <taxon>Bacteria</taxon>
        <taxon>Pseudomonadati</taxon>
        <taxon>Pseudomonadota</taxon>
        <taxon>Gammaproteobacteria</taxon>
        <taxon>Alteromonadales</taxon>
        <taxon>Shewanellaceae</taxon>
        <taxon>Shewanella</taxon>
    </lineage>
</organism>
<protein>
    <recommendedName>
        <fullName evidence="1">D-aminoacyl-tRNA deacylase</fullName>
        <shortName evidence="1">DTD</shortName>
        <ecNumber evidence="1">3.1.1.96</ecNumber>
    </recommendedName>
    <alternativeName>
        <fullName evidence="1">Gly-tRNA(Ala) deacylase</fullName>
    </alternativeName>
</protein>
<feature type="chain" id="PRO_1000050888" description="D-aminoacyl-tRNA deacylase">
    <location>
        <begin position="1"/>
        <end position="145"/>
    </location>
</feature>
<feature type="short sequence motif" description="Gly-cisPro motif, important for rejection of L-amino acids" evidence="1">
    <location>
        <begin position="137"/>
        <end position="138"/>
    </location>
</feature>
<reference key="1">
    <citation type="submission" date="2006-08" db="EMBL/GenBank/DDBJ databases">
        <title>Complete sequence of chromosome 1 of Shewanella sp. MR-7.</title>
        <authorList>
            <person name="Copeland A."/>
            <person name="Lucas S."/>
            <person name="Lapidus A."/>
            <person name="Barry K."/>
            <person name="Detter J.C."/>
            <person name="Glavina del Rio T."/>
            <person name="Hammon N."/>
            <person name="Israni S."/>
            <person name="Dalin E."/>
            <person name="Tice H."/>
            <person name="Pitluck S."/>
            <person name="Kiss H."/>
            <person name="Brettin T."/>
            <person name="Bruce D."/>
            <person name="Han C."/>
            <person name="Tapia R."/>
            <person name="Gilna P."/>
            <person name="Schmutz J."/>
            <person name="Larimer F."/>
            <person name="Land M."/>
            <person name="Hauser L."/>
            <person name="Kyrpides N."/>
            <person name="Mikhailova N."/>
            <person name="Nealson K."/>
            <person name="Konstantinidis K."/>
            <person name="Klappenbach J."/>
            <person name="Tiedje J."/>
            <person name="Richardson P."/>
        </authorList>
    </citation>
    <scope>NUCLEOTIDE SEQUENCE [LARGE SCALE GENOMIC DNA]</scope>
    <source>
        <strain>MR-7</strain>
    </source>
</reference>
<dbReference type="EC" id="3.1.1.96" evidence="1"/>
<dbReference type="EMBL" id="CP000444">
    <property type="protein sequence ID" value="ABI44685.1"/>
    <property type="molecule type" value="Genomic_DNA"/>
</dbReference>
<dbReference type="SMR" id="Q0HQC0"/>
<dbReference type="KEGG" id="shm:Shewmr7_3705"/>
<dbReference type="HOGENOM" id="CLU_076901_1_0_6"/>
<dbReference type="GO" id="GO:0005737">
    <property type="term" value="C:cytoplasm"/>
    <property type="evidence" value="ECO:0007669"/>
    <property type="project" value="UniProtKB-SubCell"/>
</dbReference>
<dbReference type="GO" id="GO:0051500">
    <property type="term" value="F:D-tyrosyl-tRNA(Tyr) deacylase activity"/>
    <property type="evidence" value="ECO:0007669"/>
    <property type="project" value="TreeGrafter"/>
</dbReference>
<dbReference type="GO" id="GO:0106026">
    <property type="term" value="F:Gly-tRNA(Ala) deacylase activity"/>
    <property type="evidence" value="ECO:0007669"/>
    <property type="project" value="UniProtKB-UniRule"/>
</dbReference>
<dbReference type="GO" id="GO:0043908">
    <property type="term" value="F:Ser(Gly)-tRNA(Ala) hydrolase activity"/>
    <property type="evidence" value="ECO:0007669"/>
    <property type="project" value="UniProtKB-UniRule"/>
</dbReference>
<dbReference type="GO" id="GO:0000049">
    <property type="term" value="F:tRNA binding"/>
    <property type="evidence" value="ECO:0007669"/>
    <property type="project" value="UniProtKB-UniRule"/>
</dbReference>
<dbReference type="GO" id="GO:0019478">
    <property type="term" value="P:D-amino acid catabolic process"/>
    <property type="evidence" value="ECO:0007669"/>
    <property type="project" value="UniProtKB-UniRule"/>
</dbReference>
<dbReference type="CDD" id="cd00563">
    <property type="entry name" value="Dtyr_deacylase"/>
    <property type="match status" value="1"/>
</dbReference>
<dbReference type="FunFam" id="3.50.80.10:FF:000001">
    <property type="entry name" value="D-aminoacyl-tRNA deacylase"/>
    <property type="match status" value="1"/>
</dbReference>
<dbReference type="Gene3D" id="3.50.80.10">
    <property type="entry name" value="D-tyrosyl-tRNA(Tyr) deacylase"/>
    <property type="match status" value="1"/>
</dbReference>
<dbReference type="HAMAP" id="MF_00518">
    <property type="entry name" value="Deacylase_Dtd"/>
    <property type="match status" value="1"/>
</dbReference>
<dbReference type="InterPro" id="IPR003732">
    <property type="entry name" value="Daa-tRNA_deacyls_DTD"/>
</dbReference>
<dbReference type="InterPro" id="IPR023509">
    <property type="entry name" value="DTD-like_sf"/>
</dbReference>
<dbReference type="NCBIfam" id="TIGR00256">
    <property type="entry name" value="D-aminoacyl-tRNA deacylase"/>
    <property type="match status" value="1"/>
</dbReference>
<dbReference type="PANTHER" id="PTHR10472:SF5">
    <property type="entry name" value="D-AMINOACYL-TRNA DEACYLASE 1"/>
    <property type="match status" value="1"/>
</dbReference>
<dbReference type="PANTHER" id="PTHR10472">
    <property type="entry name" value="D-TYROSYL-TRNA TYR DEACYLASE"/>
    <property type="match status" value="1"/>
</dbReference>
<dbReference type="Pfam" id="PF02580">
    <property type="entry name" value="Tyr_Deacylase"/>
    <property type="match status" value="1"/>
</dbReference>
<dbReference type="SUPFAM" id="SSF69500">
    <property type="entry name" value="DTD-like"/>
    <property type="match status" value="1"/>
</dbReference>
<sequence length="145" mass="15630">MIALIQRVSRASVVVDNQTIGAIDKGLLVLLGVEREDNREKMEKLATKVMSYRVFSDENGKMNLNLTQAGGSLLVVSQFTLAADTGRGLRPSFSGAGTPEQALGLYEEFVAFCRAQGVTTETGQFGADMKVELVNDGPVTFNLQV</sequence>